<name>GUND_ACET2</name>
<organism>
    <name type="scientific">Acetivibrio thermocellus (strain ATCC 27405 / DSM 1237 / JCM 9322 / NBRC 103400 / NCIMB 10682 / NRRL B-4536 / VPI 7372)</name>
    <name type="common">Clostridium thermocellum</name>
    <dbReference type="NCBI Taxonomy" id="203119"/>
    <lineage>
        <taxon>Bacteria</taxon>
        <taxon>Bacillati</taxon>
        <taxon>Bacillota</taxon>
        <taxon>Clostridia</taxon>
        <taxon>Eubacteriales</taxon>
        <taxon>Oscillospiraceae</taxon>
        <taxon>Acetivibrio</taxon>
    </lineage>
</organism>
<accession>A3DDN1</accession>
<accession>P04954</accession>
<reference key="1">
    <citation type="journal article" date="1986" name="Nucleic Acids Res.">
        <title>Nucleotide sequence of the cellulase gene celD encoding endoglucanase D of Clostridium thermocellum.</title>
        <authorList>
            <person name="Joliff G."/>
            <person name="Beguin P."/>
            <person name="Aubert J.-P."/>
        </authorList>
    </citation>
    <scope>NUCLEOTIDE SEQUENCE [GENOMIC DNA]</scope>
</reference>
<reference key="2">
    <citation type="submission" date="2007-02" db="EMBL/GenBank/DDBJ databases">
        <title>Complete sequence of Clostridium thermocellum ATCC 27405.</title>
        <authorList>
            <consortium name="US DOE Joint Genome Institute"/>
            <person name="Copeland A."/>
            <person name="Lucas S."/>
            <person name="Lapidus A."/>
            <person name="Barry K."/>
            <person name="Detter J.C."/>
            <person name="Glavina del Rio T."/>
            <person name="Hammon N."/>
            <person name="Israni S."/>
            <person name="Dalin E."/>
            <person name="Tice H."/>
            <person name="Pitluck S."/>
            <person name="Chertkov O."/>
            <person name="Brettin T."/>
            <person name="Bruce D."/>
            <person name="Han C."/>
            <person name="Tapia R."/>
            <person name="Gilna P."/>
            <person name="Schmutz J."/>
            <person name="Larimer F."/>
            <person name="Land M."/>
            <person name="Hauser L."/>
            <person name="Kyrpides N."/>
            <person name="Mikhailova N."/>
            <person name="Wu J.H.D."/>
            <person name="Newcomb M."/>
            <person name="Richardson P."/>
        </authorList>
    </citation>
    <scope>NUCLEOTIDE SEQUENCE [LARGE SCALE GENOMIC DNA]</scope>
    <source>
        <strain>ATCC 27405 / DSM 1237 / JCM 9322 / NBRC 103400 / NCIMB 10682 / NRRL B-4536 / VPI 7372</strain>
    </source>
</reference>
<comment type="function">
    <text evidence="1">This enzyme catalyzes the endohydrolysis of 1,4-beta-glucosidic linkages in cellulose, lichenin and cereal beta-D-glucans.</text>
</comment>
<comment type="catalytic activity">
    <reaction>
        <text>Endohydrolysis of (1-&gt;4)-beta-D-glucosidic linkages in cellulose, lichenin and cereal beta-D-glucans.</text>
        <dbReference type="EC" id="3.2.1.4"/>
    </reaction>
</comment>
<comment type="cofactor">
    <cofactor evidence="1">
        <name>Ca(2+)</name>
        <dbReference type="ChEBI" id="CHEBI:29108"/>
    </cofactor>
</comment>
<comment type="similarity">
    <text evidence="5 6">Belongs to the glycosyl hydrolase 9 (cellulase E) family.</text>
</comment>
<evidence type="ECO:0000250" key="1"/>
<evidence type="ECO:0000255" key="2">
    <source>
        <dbReference type="PROSITE-ProRule" id="PRU01102"/>
    </source>
</evidence>
<evidence type="ECO:0000255" key="3">
    <source>
        <dbReference type="PROSITE-ProRule" id="PRU10059"/>
    </source>
</evidence>
<evidence type="ECO:0000255" key="4">
    <source>
        <dbReference type="PROSITE-ProRule" id="PRU10060"/>
    </source>
</evidence>
<evidence type="ECO:0000255" key="5">
    <source>
        <dbReference type="PROSITE-ProRule" id="PRU10140"/>
    </source>
</evidence>
<evidence type="ECO:0000305" key="6"/>
<evidence type="ECO:0007829" key="7">
    <source>
        <dbReference type="PDB" id="4FL4"/>
    </source>
</evidence>
<proteinExistence type="evidence at protein level"/>
<feature type="signal peptide" evidence="1">
    <location>
        <begin position="1"/>
        <end position="41"/>
    </location>
</feature>
<feature type="chain" id="PRO_0000284722" description="Endoglucanase D">
    <location>
        <begin position="42"/>
        <end position="649"/>
    </location>
</feature>
<feature type="domain" description="Dockerin" evidence="2">
    <location>
        <begin position="579"/>
        <end position="649"/>
    </location>
</feature>
<feature type="active site" description="Nucleophile" evidence="5">
    <location>
        <position position="201"/>
    </location>
</feature>
<feature type="active site" evidence="3">
    <location>
        <position position="516"/>
    </location>
</feature>
<feature type="active site" evidence="4">
    <location>
        <position position="546"/>
    </location>
</feature>
<feature type="active site" description="Proton donor" evidence="4">
    <location>
        <position position="555"/>
    </location>
</feature>
<feature type="sequence conflict" description="In Ref. 1; CAA28255." evidence="6" ref="1">
    <original>A</original>
    <variation>P</variation>
    <location>
        <position position="577"/>
    </location>
</feature>
<feature type="helix" evidence="7">
    <location>
        <begin position="594"/>
        <end position="604"/>
    </location>
</feature>
<feature type="helix" evidence="7">
    <location>
        <begin position="614"/>
        <end position="620"/>
    </location>
</feature>
<feature type="helix" evidence="7">
    <location>
        <begin position="630"/>
        <end position="640"/>
    </location>
</feature>
<feature type="strand" evidence="7">
    <location>
        <begin position="643"/>
        <end position="645"/>
    </location>
</feature>
<dbReference type="EC" id="3.2.1.4"/>
<dbReference type="EMBL" id="X04584">
    <property type="protein sequence ID" value="CAA28255.1"/>
    <property type="molecule type" value="Genomic_DNA"/>
</dbReference>
<dbReference type="EMBL" id="CP000568">
    <property type="protein sequence ID" value="ABN52060.1"/>
    <property type="molecule type" value="Genomic_DNA"/>
</dbReference>
<dbReference type="PIR" id="A25535">
    <property type="entry name" value="CZCLDM"/>
</dbReference>
<dbReference type="RefSeq" id="WP_011837914.1">
    <property type="nucleotide sequence ID" value="NC_009012.1"/>
</dbReference>
<dbReference type="PDB" id="4FL4">
    <property type="method" value="X-ray"/>
    <property type="resolution" value="2.90 A"/>
    <property type="chains" value="A/D/G/J=584-649"/>
</dbReference>
<dbReference type="PDBsum" id="4FL4"/>
<dbReference type="SMR" id="A3DDN1"/>
<dbReference type="STRING" id="203119.Cthe_0825"/>
<dbReference type="CAZy" id="GH9">
    <property type="family name" value="Glycoside Hydrolase Family 9"/>
</dbReference>
<dbReference type="GeneID" id="35803078"/>
<dbReference type="KEGG" id="cth:Cthe_0825"/>
<dbReference type="eggNOG" id="COG3291">
    <property type="taxonomic scope" value="Bacteria"/>
</dbReference>
<dbReference type="HOGENOM" id="CLU_006010_2_1_9"/>
<dbReference type="OrthoDB" id="9758662at2"/>
<dbReference type="BioCyc" id="MetaCyc:MONOMER-16416"/>
<dbReference type="EvolutionaryTrace" id="A3DDN1"/>
<dbReference type="Proteomes" id="UP000002145">
    <property type="component" value="Chromosome"/>
</dbReference>
<dbReference type="GO" id="GO:0008810">
    <property type="term" value="F:cellulase activity"/>
    <property type="evidence" value="ECO:0007669"/>
    <property type="project" value="UniProtKB-EC"/>
</dbReference>
<dbReference type="GO" id="GO:0030245">
    <property type="term" value="P:cellulose catabolic process"/>
    <property type="evidence" value="ECO:0007669"/>
    <property type="project" value="UniProtKB-KW"/>
</dbReference>
<dbReference type="CDD" id="cd14256">
    <property type="entry name" value="Dockerin_I"/>
    <property type="match status" value="1"/>
</dbReference>
<dbReference type="CDD" id="cd02850">
    <property type="entry name" value="E_set_Cellulase_N"/>
    <property type="match status" value="1"/>
</dbReference>
<dbReference type="FunFam" id="1.10.1330.10:FF:000001">
    <property type="entry name" value="Endoglucanase D"/>
    <property type="match status" value="1"/>
</dbReference>
<dbReference type="Gene3D" id="1.50.10.10">
    <property type="match status" value="1"/>
</dbReference>
<dbReference type="Gene3D" id="1.10.1330.10">
    <property type="entry name" value="Dockerin domain"/>
    <property type="match status" value="1"/>
</dbReference>
<dbReference type="Gene3D" id="2.60.40.10">
    <property type="entry name" value="Immunoglobulins"/>
    <property type="match status" value="1"/>
</dbReference>
<dbReference type="InterPro" id="IPR008928">
    <property type="entry name" value="6-hairpin_glycosidase_sf"/>
</dbReference>
<dbReference type="InterPro" id="IPR012341">
    <property type="entry name" value="6hp_glycosidase-like_sf"/>
</dbReference>
<dbReference type="InterPro" id="IPR004197">
    <property type="entry name" value="Cellulase_Ig-like"/>
</dbReference>
<dbReference type="InterPro" id="IPR002105">
    <property type="entry name" value="Dockerin_1_rpt"/>
</dbReference>
<dbReference type="InterPro" id="IPR016134">
    <property type="entry name" value="Dockerin_dom"/>
</dbReference>
<dbReference type="InterPro" id="IPR036439">
    <property type="entry name" value="Dockerin_dom_sf"/>
</dbReference>
<dbReference type="InterPro" id="IPR018247">
    <property type="entry name" value="EF_Hand_1_Ca_BS"/>
</dbReference>
<dbReference type="InterPro" id="IPR001701">
    <property type="entry name" value="Glyco_hydro_9"/>
</dbReference>
<dbReference type="InterPro" id="IPR033126">
    <property type="entry name" value="Glyco_hydro_9_Asp/Glu_AS"/>
</dbReference>
<dbReference type="InterPro" id="IPR018221">
    <property type="entry name" value="Glyco_hydro_9_His_AS"/>
</dbReference>
<dbReference type="InterPro" id="IPR013783">
    <property type="entry name" value="Ig-like_fold"/>
</dbReference>
<dbReference type="InterPro" id="IPR014756">
    <property type="entry name" value="Ig_E-set"/>
</dbReference>
<dbReference type="PANTHER" id="PTHR22298">
    <property type="entry name" value="ENDO-1,4-BETA-GLUCANASE"/>
    <property type="match status" value="1"/>
</dbReference>
<dbReference type="Pfam" id="PF02927">
    <property type="entry name" value="CelD_N"/>
    <property type="match status" value="1"/>
</dbReference>
<dbReference type="Pfam" id="PF00404">
    <property type="entry name" value="Dockerin_1"/>
    <property type="match status" value="1"/>
</dbReference>
<dbReference type="Pfam" id="PF00759">
    <property type="entry name" value="Glyco_hydro_9"/>
    <property type="match status" value="1"/>
</dbReference>
<dbReference type="SUPFAM" id="SSF81296">
    <property type="entry name" value="E set domains"/>
    <property type="match status" value="1"/>
</dbReference>
<dbReference type="SUPFAM" id="SSF48208">
    <property type="entry name" value="Six-hairpin glycosidases"/>
    <property type="match status" value="1"/>
</dbReference>
<dbReference type="SUPFAM" id="SSF63446">
    <property type="entry name" value="Type I dockerin domain"/>
    <property type="match status" value="1"/>
</dbReference>
<dbReference type="PROSITE" id="PS00448">
    <property type="entry name" value="CLOS_CELLULOSOME_RPT"/>
    <property type="match status" value="2"/>
</dbReference>
<dbReference type="PROSITE" id="PS51766">
    <property type="entry name" value="DOCKERIN"/>
    <property type="match status" value="1"/>
</dbReference>
<dbReference type="PROSITE" id="PS00018">
    <property type="entry name" value="EF_HAND_1"/>
    <property type="match status" value="2"/>
</dbReference>
<dbReference type="PROSITE" id="PS60032">
    <property type="entry name" value="GH9_1"/>
    <property type="match status" value="1"/>
</dbReference>
<dbReference type="PROSITE" id="PS00592">
    <property type="entry name" value="GH9_2"/>
    <property type="match status" value="1"/>
</dbReference>
<dbReference type="PROSITE" id="PS00698">
    <property type="entry name" value="GH9_3"/>
    <property type="match status" value="1"/>
</dbReference>
<protein>
    <recommendedName>
        <fullName>Endoglucanase D</fullName>
        <shortName>EGD</shortName>
        <ecNumber>3.2.1.4</ecNumber>
    </recommendedName>
    <alternativeName>
        <fullName>Cellulase D</fullName>
    </alternativeName>
    <alternativeName>
        <fullName>Endo-1,4-beta-glucanase</fullName>
    </alternativeName>
</protein>
<sequence length="649" mass="72415">MSRMTLKSSMKKRVLSLLIAVVFLSLTGVFPSGLIETKVSAAKITENYQFDSRIRLNSIGFIPNHSKKATIAANCSTFYVVKEDGTIVYTGTATSMFDNDTKETVYIADFSSVNEEGTYYLAVPGVGKSVNFKIAMNVYEDAFKTAMLGMYLLRCGTSVSATYNGIHYSHGPCHTNDAYLDYINGQHTKKDSTKGWHDAGDYNKYVVNAGITVGSMFLAWEHFKDQLEPVALEIPEKNNSIPDFLDELKYEIDWILTMQYPDGSGRVAHKVSTRNFGGFIMPENEHDERFFVPWSSAATADFVAMTAMAARIFRPYDPQYAEKCINAAKVSYEFLKNNPANVFANQSGFSTGEYATVSDADDRLWAAAEMWETLGDEEYLRDFENRAAQFSKKIEADFDWDNVANLGMFTYLLSERPGKNPALVQSIKDSLLSTADSIVRTSQNHGYGRTLGTTYYWGCNGTVVRQTMILQVANKISPNNDYVNAALDAISHVFGRNYYNRSYVTGLGINPPMNPHDRRSGADGIWEPWPGYLVGGGWPGPKDWVDIQDSYQTNEIAINWNAALIYALAGFVNYNSAQNEVLYGDVNDDGKVNSTDLTLLKRYVLKAVSTLPSSKAEKNADVNRDGRVNSSDVTILSRYLIRVIEKLPI</sequence>
<gene>
    <name type="primary">celD</name>
    <name type="ordered locus">Cthe_0825</name>
</gene>
<keyword id="KW-0002">3D-structure</keyword>
<keyword id="KW-0106">Calcium</keyword>
<keyword id="KW-0119">Carbohydrate metabolism</keyword>
<keyword id="KW-0136">Cellulose degradation</keyword>
<keyword id="KW-0326">Glycosidase</keyword>
<keyword id="KW-0378">Hydrolase</keyword>
<keyword id="KW-0624">Polysaccharide degradation</keyword>
<keyword id="KW-1185">Reference proteome</keyword>
<keyword id="KW-0732">Signal</keyword>